<reference key="1">
    <citation type="journal article" date="2004" name="PLoS Biol.">
        <title>Genomic insights into methanotrophy: the complete genome sequence of Methylococcus capsulatus (Bath).</title>
        <authorList>
            <person name="Ward N.L."/>
            <person name="Larsen O."/>
            <person name="Sakwa J."/>
            <person name="Bruseth L."/>
            <person name="Khouri H.M."/>
            <person name="Durkin A.S."/>
            <person name="Dimitrov G."/>
            <person name="Jiang L."/>
            <person name="Scanlan D."/>
            <person name="Kang K.H."/>
            <person name="Lewis M.R."/>
            <person name="Nelson K.E."/>
            <person name="Methe B.A."/>
            <person name="Wu M."/>
            <person name="Heidelberg J.F."/>
            <person name="Paulsen I.T."/>
            <person name="Fouts D.E."/>
            <person name="Ravel J."/>
            <person name="Tettelin H."/>
            <person name="Ren Q."/>
            <person name="Read T.D."/>
            <person name="DeBoy R.T."/>
            <person name="Seshadri R."/>
            <person name="Salzberg S.L."/>
            <person name="Jensen H.B."/>
            <person name="Birkeland N.K."/>
            <person name="Nelson W.C."/>
            <person name="Dodson R.J."/>
            <person name="Grindhaug S.H."/>
            <person name="Holt I.E."/>
            <person name="Eidhammer I."/>
            <person name="Jonasen I."/>
            <person name="Vanaken S."/>
            <person name="Utterback T.R."/>
            <person name="Feldblyum T.V."/>
            <person name="Fraser C.M."/>
            <person name="Lillehaug J.R."/>
            <person name="Eisen J.A."/>
        </authorList>
    </citation>
    <scope>NUCLEOTIDE SEQUENCE [LARGE SCALE GENOMIC DNA]</scope>
    <source>
        <strain>ATCC 33009 / NCIMB 11132 / Bath</strain>
    </source>
</reference>
<organism>
    <name type="scientific">Methylococcus capsulatus (strain ATCC 33009 / NCIMB 11132 / Bath)</name>
    <dbReference type="NCBI Taxonomy" id="243233"/>
    <lineage>
        <taxon>Bacteria</taxon>
        <taxon>Pseudomonadati</taxon>
        <taxon>Pseudomonadota</taxon>
        <taxon>Gammaproteobacteria</taxon>
        <taxon>Methylococcales</taxon>
        <taxon>Methylococcaceae</taxon>
        <taxon>Methylococcus</taxon>
    </lineage>
</organism>
<keyword id="KW-0028">Amino-acid biosynthesis</keyword>
<keyword id="KW-0057">Aromatic amino acid biosynthesis</keyword>
<keyword id="KW-0456">Lyase</keyword>
<keyword id="KW-0663">Pyridoxal phosphate</keyword>
<keyword id="KW-1185">Reference proteome</keyword>
<keyword id="KW-0822">Tryptophan biosynthesis</keyword>
<sequence length="405" mass="43992">MIMQDEIQPYDLPDELGHFGPYGGIFVAETLMEPLEELKAAYHRYLKDPEFLAELDHDLNHYVGRPSPIYHAERLSRELGGAQIFFKREDLNHTGAHKVNNTVGQALLAKRMGKRRVIAETGAGQHGVATATVAARLGMECVVYMGAVDVQRQALNVFRMKLLGATVIAVDSGSRTLKDALNEAMRDWVTNVDDTFYIIGTVAGPHPYPAMVRDFQAVIGREARRQMLEMTGRLPDALVACVGGGSNAIGLFHPFVDDREVAMYGVEAAGDGIETGRHSAPLSAGRPGVLHGNRTYLMEDEDGEIIETHSISAGLDYPGVGPEHAWLKDCGRASYVSATDAEALEAFHILTRSEGIIPALESSHAVAYALKLAPTLSSDKIVLVNLSGRGDKDIHTIATREGIVL</sequence>
<accession>Q604P3</accession>
<comment type="function">
    <text evidence="1">The beta subunit is responsible for the synthesis of L-tryptophan from indole and L-serine.</text>
</comment>
<comment type="catalytic activity">
    <reaction evidence="1">
        <text>(1S,2R)-1-C-(indol-3-yl)glycerol 3-phosphate + L-serine = D-glyceraldehyde 3-phosphate + L-tryptophan + H2O</text>
        <dbReference type="Rhea" id="RHEA:10532"/>
        <dbReference type="ChEBI" id="CHEBI:15377"/>
        <dbReference type="ChEBI" id="CHEBI:33384"/>
        <dbReference type="ChEBI" id="CHEBI:57912"/>
        <dbReference type="ChEBI" id="CHEBI:58866"/>
        <dbReference type="ChEBI" id="CHEBI:59776"/>
        <dbReference type="EC" id="4.2.1.20"/>
    </reaction>
</comment>
<comment type="cofactor">
    <cofactor evidence="1">
        <name>pyridoxal 5'-phosphate</name>
        <dbReference type="ChEBI" id="CHEBI:597326"/>
    </cofactor>
</comment>
<comment type="pathway">
    <text evidence="1">Amino-acid biosynthesis; L-tryptophan biosynthesis; L-tryptophan from chorismate: step 5/5.</text>
</comment>
<comment type="subunit">
    <text evidence="1">Tetramer of two alpha and two beta chains.</text>
</comment>
<comment type="similarity">
    <text evidence="1">Belongs to the TrpB family.</text>
</comment>
<feature type="chain" id="PRO_1000018358" description="Tryptophan synthase beta chain">
    <location>
        <begin position="1"/>
        <end position="405"/>
    </location>
</feature>
<feature type="modified residue" description="N6-(pyridoxal phosphate)lysine" evidence="1">
    <location>
        <position position="98"/>
    </location>
</feature>
<dbReference type="EC" id="4.2.1.20" evidence="1"/>
<dbReference type="EMBL" id="AE017282">
    <property type="protein sequence ID" value="AAU91370.1"/>
    <property type="molecule type" value="Genomic_DNA"/>
</dbReference>
<dbReference type="SMR" id="Q604P3"/>
<dbReference type="STRING" id="243233.MCA2495"/>
<dbReference type="KEGG" id="mca:MCA2495"/>
<dbReference type="eggNOG" id="COG0133">
    <property type="taxonomic scope" value="Bacteria"/>
</dbReference>
<dbReference type="HOGENOM" id="CLU_016734_3_1_6"/>
<dbReference type="UniPathway" id="UPA00035">
    <property type="reaction ID" value="UER00044"/>
</dbReference>
<dbReference type="Proteomes" id="UP000006821">
    <property type="component" value="Chromosome"/>
</dbReference>
<dbReference type="GO" id="GO:0005737">
    <property type="term" value="C:cytoplasm"/>
    <property type="evidence" value="ECO:0007669"/>
    <property type="project" value="TreeGrafter"/>
</dbReference>
<dbReference type="GO" id="GO:0004834">
    <property type="term" value="F:tryptophan synthase activity"/>
    <property type="evidence" value="ECO:0007669"/>
    <property type="project" value="UniProtKB-UniRule"/>
</dbReference>
<dbReference type="CDD" id="cd06446">
    <property type="entry name" value="Trp-synth_B"/>
    <property type="match status" value="1"/>
</dbReference>
<dbReference type="FunFam" id="3.40.50.1100:FF:000001">
    <property type="entry name" value="Tryptophan synthase beta chain"/>
    <property type="match status" value="1"/>
</dbReference>
<dbReference type="FunFam" id="3.40.50.1100:FF:000004">
    <property type="entry name" value="Tryptophan synthase beta chain"/>
    <property type="match status" value="1"/>
</dbReference>
<dbReference type="Gene3D" id="3.40.50.1100">
    <property type="match status" value="2"/>
</dbReference>
<dbReference type="HAMAP" id="MF_00133">
    <property type="entry name" value="Trp_synth_beta"/>
    <property type="match status" value="1"/>
</dbReference>
<dbReference type="InterPro" id="IPR006653">
    <property type="entry name" value="Trp_synth_b_CS"/>
</dbReference>
<dbReference type="InterPro" id="IPR006654">
    <property type="entry name" value="Trp_synth_beta"/>
</dbReference>
<dbReference type="InterPro" id="IPR023026">
    <property type="entry name" value="Trp_synth_beta/beta-like"/>
</dbReference>
<dbReference type="InterPro" id="IPR001926">
    <property type="entry name" value="TrpB-like_PALP"/>
</dbReference>
<dbReference type="InterPro" id="IPR036052">
    <property type="entry name" value="TrpB-like_PALP_sf"/>
</dbReference>
<dbReference type="NCBIfam" id="TIGR00263">
    <property type="entry name" value="trpB"/>
    <property type="match status" value="1"/>
</dbReference>
<dbReference type="PANTHER" id="PTHR48077:SF3">
    <property type="entry name" value="TRYPTOPHAN SYNTHASE"/>
    <property type="match status" value="1"/>
</dbReference>
<dbReference type="PANTHER" id="PTHR48077">
    <property type="entry name" value="TRYPTOPHAN SYNTHASE-RELATED"/>
    <property type="match status" value="1"/>
</dbReference>
<dbReference type="Pfam" id="PF00291">
    <property type="entry name" value="PALP"/>
    <property type="match status" value="1"/>
</dbReference>
<dbReference type="PIRSF" id="PIRSF001413">
    <property type="entry name" value="Trp_syn_beta"/>
    <property type="match status" value="1"/>
</dbReference>
<dbReference type="SUPFAM" id="SSF53686">
    <property type="entry name" value="Tryptophan synthase beta subunit-like PLP-dependent enzymes"/>
    <property type="match status" value="1"/>
</dbReference>
<dbReference type="PROSITE" id="PS00168">
    <property type="entry name" value="TRP_SYNTHASE_BETA"/>
    <property type="match status" value="1"/>
</dbReference>
<name>TRPB_METCA</name>
<proteinExistence type="inferred from homology"/>
<protein>
    <recommendedName>
        <fullName evidence="1">Tryptophan synthase beta chain</fullName>
        <ecNumber evidence="1">4.2.1.20</ecNumber>
    </recommendedName>
</protein>
<gene>
    <name evidence="1" type="primary">trpB</name>
    <name type="ordered locus">MCA2495</name>
</gene>
<evidence type="ECO:0000255" key="1">
    <source>
        <dbReference type="HAMAP-Rule" id="MF_00133"/>
    </source>
</evidence>